<comment type="function">
    <text evidence="1">Snake venom serine protease that may act in the hemostasis system of the prey.</text>
</comment>
<comment type="subunit">
    <text evidence="1">Monomer.</text>
</comment>
<comment type="subcellular location">
    <subcellularLocation>
        <location evidence="1">Secreted</location>
    </subcellularLocation>
</comment>
<comment type="tissue specificity">
    <text>Expressed by the venom gland.</text>
</comment>
<comment type="similarity">
    <text evidence="3">Belongs to the peptidase S1 family. Snake venom subfamily.</text>
</comment>
<sequence length="257" mass="28065">MVLIRVLANLLILQLSYAQKSSELVIGGDECNINEHRSLVVLFNSSGALCGGTLINQEWVLTAAHCDMPNMQIYLGVHSASVPNDDEQARDPEEKYFCLSSNNDTEWDKDIMLIRLNRSVRNSKHIAPLSLPSSPPSVGSVCRIMGWGAITSPNETYPDVPYCANIKLLRYSLCRVYQRMPAQSRILCAGILQGGKGICKGDSGGPLICNGQFQGIVHGGGKTCAQPYEPGLYIKVFDYTDWIQNIIAGNTTATCPP</sequence>
<organism>
    <name type="scientific">Protobothrops flavoviridis</name>
    <name type="common">Habu</name>
    <name type="synonym">Trimeresurus flavoviridis</name>
    <dbReference type="NCBI Taxonomy" id="88087"/>
    <lineage>
        <taxon>Eukaryota</taxon>
        <taxon>Metazoa</taxon>
        <taxon>Chordata</taxon>
        <taxon>Craniata</taxon>
        <taxon>Vertebrata</taxon>
        <taxon>Euteleostomi</taxon>
        <taxon>Lepidosauria</taxon>
        <taxon>Squamata</taxon>
        <taxon>Bifurcata</taxon>
        <taxon>Unidentata</taxon>
        <taxon>Episquamata</taxon>
        <taxon>Toxicofera</taxon>
        <taxon>Serpentes</taxon>
        <taxon>Colubroidea</taxon>
        <taxon>Viperidae</taxon>
        <taxon>Crotalinae</taxon>
        <taxon>Protobothrops</taxon>
    </lineage>
</organism>
<accession>O13058</accession>
<evidence type="ECO:0000250" key="1"/>
<evidence type="ECO:0000255" key="2"/>
<evidence type="ECO:0000255" key="3">
    <source>
        <dbReference type="PROSITE-ProRule" id="PRU00274"/>
    </source>
</evidence>
<keyword id="KW-1015">Disulfide bond</keyword>
<keyword id="KW-0325">Glycoprotein</keyword>
<keyword id="KW-1199">Hemostasis impairing toxin</keyword>
<keyword id="KW-0378">Hydrolase</keyword>
<keyword id="KW-0645">Protease</keyword>
<keyword id="KW-0964">Secreted</keyword>
<keyword id="KW-0720">Serine protease</keyword>
<keyword id="KW-0732">Signal</keyword>
<keyword id="KW-0800">Toxin</keyword>
<keyword id="KW-0865">Zymogen</keyword>
<protein>
    <recommendedName>
        <fullName>Snake venom serine protease 3</fullName>
        <shortName>SVSP 3</shortName>
        <ecNumber>3.4.21.-</ecNumber>
    </recommendedName>
</protein>
<reference key="1">
    <citation type="journal article" date="1996" name="FEBS Lett.">
        <title>Accelerated evolution of crotalinae snake venom gland serine proteases.</title>
        <authorList>
            <person name="Deshimaru M."/>
            <person name="Ogawa T."/>
            <person name="Nakashima K."/>
            <person name="Nobuhisa I."/>
            <person name="Chijiwa T."/>
            <person name="Shimohigashi Y."/>
            <person name="Fukumaki Y."/>
            <person name="Niwa M."/>
            <person name="Yamashina I."/>
            <person name="Hattori S."/>
            <person name="Ohno M."/>
        </authorList>
    </citation>
    <scope>NUCLEOTIDE SEQUENCE [MRNA]</scope>
    <source>
        <tissue>Venom gland</tissue>
    </source>
</reference>
<dbReference type="EC" id="3.4.21.-"/>
<dbReference type="EMBL" id="D67080">
    <property type="protein sequence ID" value="BAA19978.1"/>
    <property type="molecule type" value="mRNA"/>
</dbReference>
<dbReference type="SMR" id="O13058"/>
<dbReference type="MEROPS" id="S01.188"/>
<dbReference type="GlyCosmos" id="O13058">
    <property type="glycosylation" value="5 sites, No reported glycans"/>
</dbReference>
<dbReference type="GO" id="GO:0005576">
    <property type="term" value="C:extracellular region"/>
    <property type="evidence" value="ECO:0007669"/>
    <property type="project" value="UniProtKB-SubCell"/>
</dbReference>
<dbReference type="GO" id="GO:0030141">
    <property type="term" value="C:secretory granule"/>
    <property type="evidence" value="ECO:0007669"/>
    <property type="project" value="TreeGrafter"/>
</dbReference>
<dbReference type="GO" id="GO:0004252">
    <property type="term" value="F:serine-type endopeptidase activity"/>
    <property type="evidence" value="ECO:0007669"/>
    <property type="project" value="InterPro"/>
</dbReference>
<dbReference type="GO" id="GO:0090729">
    <property type="term" value="F:toxin activity"/>
    <property type="evidence" value="ECO:0007669"/>
    <property type="project" value="UniProtKB-KW"/>
</dbReference>
<dbReference type="GO" id="GO:0006508">
    <property type="term" value="P:proteolysis"/>
    <property type="evidence" value="ECO:0007669"/>
    <property type="project" value="UniProtKB-KW"/>
</dbReference>
<dbReference type="CDD" id="cd00190">
    <property type="entry name" value="Tryp_SPc"/>
    <property type="match status" value="1"/>
</dbReference>
<dbReference type="FunFam" id="2.40.10.10:FF:000010">
    <property type="entry name" value="Kallikrein related peptidase 11"/>
    <property type="match status" value="1"/>
</dbReference>
<dbReference type="Gene3D" id="2.40.10.10">
    <property type="entry name" value="Trypsin-like serine proteases"/>
    <property type="match status" value="2"/>
</dbReference>
<dbReference type="InterPro" id="IPR009003">
    <property type="entry name" value="Peptidase_S1_PA"/>
</dbReference>
<dbReference type="InterPro" id="IPR043504">
    <property type="entry name" value="Peptidase_S1_PA_chymotrypsin"/>
</dbReference>
<dbReference type="InterPro" id="IPR001314">
    <property type="entry name" value="Peptidase_S1A"/>
</dbReference>
<dbReference type="InterPro" id="IPR001254">
    <property type="entry name" value="Trypsin_dom"/>
</dbReference>
<dbReference type="InterPro" id="IPR018114">
    <property type="entry name" value="TRYPSIN_HIS"/>
</dbReference>
<dbReference type="InterPro" id="IPR033116">
    <property type="entry name" value="TRYPSIN_SER"/>
</dbReference>
<dbReference type="PANTHER" id="PTHR24271:SF47">
    <property type="entry name" value="KALLIKREIN-1"/>
    <property type="match status" value="1"/>
</dbReference>
<dbReference type="PANTHER" id="PTHR24271">
    <property type="entry name" value="KALLIKREIN-RELATED"/>
    <property type="match status" value="1"/>
</dbReference>
<dbReference type="Pfam" id="PF00089">
    <property type="entry name" value="Trypsin"/>
    <property type="match status" value="1"/>
</dbReference>
<dbReference type="PRINTS" id="PR00722">
    <property type="entry name" value="CHYMOTRYPSIN"/>
</dbReference>
<dbReference type="SMART" id="SM00020">
    <property type="entry name" value="Tryp_SPc"/>
    <property type="match status" value="1"/>
</dbReference>
<dbReference type="SUPFAM" id="SSF50494">
    <property type="entry name" value="Trypsin-like serine proteases"/>
    <property type="match status" value="1"/>
</dbReference>
<dbReference type="PROSITE" id="PS50240">
    <property type="entry name" value="TRYPSIN_DOM"/>
    <property type="match status" value="1"/>
</dbReference>
<dbReference type="PROSITE" id="PS00134">
    <property type="entry name" value="TRYPSIN_HIS"/>
    <property type="match status" value="1"/>
</dbReference>
<dbReference type="PROSITE" id="PS00135">
    <property type="entry name" value="TRYPSIN_SER"/>
    <property type="match status" value="1"/>
</dbReference>
<feature type="signal peptide" evidence="1">
    <location>
        <begin position="1"/>
        <end position="18"/>
    </location>
</feature>
<feature type="propeptide" id="PRO_0000028389" evidence="1">
    <location>
        <begin position="19"/>
        <end position="24"/>
    </location>
</feature>
<feature type="chain" id="PRO_0000028390" description="Snake venom serine protease 3">
    <location>
        <begin position="25"/>
        <end position="257"/>
    </location>
</feature>
<feature type="domain" description="Peptidase S1" evidence="3">
    <location>
        <begin position="25"/>
        <end position="248"/>
    </location>
</feature>
<feature type="active site" description="Charge relay system" evidence="1">
    <location>
        <position position="65"/>
    </location>
</feature>
<feature type="active site" description="Charge relay system" evidence="1">
    <location>
        <position position="110"/>
    </location>
</feature>
<feature type="active site" description="Charge relay system" evidence="1">
    <location>
        <position position="203"/>
    </location>
</feature>
<feature type="glycosylation site" description="N-linked (GlcNAc...) asparagine" evidence="2">
    <location>
        <position position="44"/>
    </location>
</feature>
<feature type="glycosylation site" description="N-linked (GlcNAc...) asparagine" evidence="2">
    <location>
        <position position="103"/>
    </location>
</feature>
<feature type="glycosylation site" description="N-linked (GlcNAc...) asparagine" evidence="2">
    <location>
        <position position="117"/>
    </location>
</feature>
<feature type="glycosylation site" description="N-linked (GlcNAc...) asparagine" evidence="2">
    <location>
        <position position="154"/>
    </location>
</feature>
<feature type="glycosylation site" description="N-linked (GlcNAc...) asparagine" evidence="2">
    <location>
        <position position="250"/>
    </location>
</feature>
<feature type="disulfide bond" evidence="3">
    <location>
        <begin position="31"/>
        <end position="163"/>
    </location>
</feature>
<feature type="disulfide bond" evidence="3">
    <location>
        <begin position="50"/>
        <end position="66"/>
    </location>
</feature>
<feature type="disulfide bond" evidence="3">
    <location>
        <begin position="98"/>
        <end position="255"/>
    </location>
</feature>
<feature type="disulfide bond" evidence="3">
    <location>
        <begin position="142"/>
        <end position="209"/>
    </location>
</feature>
<feature type="disulfide bond" evidence="3">
    <location>
        <begin position="174"/>
        <end position="188"/>
    </location>
</feature>
<feature type="disulfide bond" evidence="3">
    <location>
        <begin position="199"/>
        <end position="224"/>
    </location>
</feature>
<gene>
    <name type="primary">TLF3</name>
</gene>
<proteinExistence type="evidence at transcript level"/>
<name>VSP3_PROFL</name>